<gene>
    <name evidence="1" type="primary">lpxH</name>
    <name type="ordered locus">PSPPH_1676</name>
</gene>
<feature type="chain" id="PRO_1000025067" description="UDP-2,3-diacylglucosamine hydrolase">
    <location>
        <begin position="1"/>
        <end position="248"/>
    </location>
</feature>
<feature type="binding site" evidence="1">
    <location>
        <position position="7"/>
    </location>
    <ligand>
        <name>Mn(2+)</name>
        <dbReference type="ChEBI" id="CHEBI:29035"/>
        <label>1</label>
    </ligand>
</feature>
<feature type="binding site" evidence="1">
    <location>
        <position position="9"/>
    </location>
    <ligand>
        <name>Mn(2+)</name>
        <dbReference type="ChEBI" id="CHEBI:29035"/>
        <label>1</label>
    </ligand>
</feature>
<feature type="binding site" evidence="1">
    <location>
        <position position="40"/>
    </location>
    <ligand>
        <name>Mn(2+)</name>
        <dbReference type="ChEBI" id="CHEBI:29035"/>
        <label>1</label>
    </ligand>
</feature>
<feature type="binding site" evidence="1">
    <location>
        <position position="40"/>
    </location>
    <ligand>
        <name>Mn(2+)</name>
        <dbReference type="ChEBI" id="CHEBI:29035"/>
        <label>2</label>
    </ligand>
</feature>
<feature type="binding site" evidence="1">
    <location>
        <begin position="78"/>
        <end position="79"/>
    </location>
    <ligand>
        <name>substrate</name>
    </ligand>
</feature>
<feature type="binding site" evidence="1">
    <location>
        <position position="78"/>
    </location>
    <ligand>
        <name>Mn(2+)</name>
        <dbReference type="ChEBI" id="CHEBI:29035"/>
        <label>2</label>
    </ligand>
</feature>
<feature type="binding site" evidence="1">
    <location>
        <position position="113"/>
    </location>
    <ligand>
        <name>Mn(2+)</name>
        <dbReference type="ChEBI" id="CHEBI:29035"/>
        <label>2</label>
    </ligand>
</feature>
<feature type="binding site" evidence="1">
    <location>
        <position position="121"/>
    </location>
    <ligand>
        <name>substrate</name>
    </ligand>
</feature>
<feature type="binding site" evidence="1">
    <location>
        <position position="159"/>
    </location>
    <ligand>
        <name>substrate</name>
    </ligand>
</feature>
<feature type="binding site" evidence="1">
    <location>
        <position position="163"/>
    </location>
    <ligand>
        <name>substrate</name>
    </ligand>
</feature>
<feature type="binding site" evidence="1">
    <location>
        <position position="166"/>
    </location>
    <ligand>
        <name>substrate</name>
    </ligand>
</feature>
<feature type="binding site" evidence="1">
    <location>
        <position position="194"/>
    </location>
    <ligand>
        <name>Mn(2+)</name>
        <dbReference type="ChEBI" id="CHEBI:29035"/>
        <label>2</label>
    </ligand>
</feature>
<feature type="binding site" evidence="1">
    <location>
        <position position="194"/>
    </location>
    <ligand>
        <name>substrate</name>
    </ligand>
</feature>
<feature type="binding site" evidence="1">
    <location>
        <position position="196"/>
    </location>
    <ligand>
        <name>Mn(2+)</name>
        <dbReference type="ChEBI" id="CHEBI:29035"/>
        <label>1</label>
    </ligand>
</feature>
<keyword id="KW-0997">Cell inner membrane</keyword>
<keyword id="KW-1003">Cell membrane</keyword>
<keyword id="KW-0378">Hydrolase</keyword>
<keyword id="KW-0441">Lipid A biosynthesis</keyword>
<keyword id="KW-0444">Lipid biosynthesis</keyword>
<keyword id="KW-0443">Lipid metabolism</keyword>
<keyword id="KW-0464">Manganese</keyword>
<keyword id="KW-0472">Membrane</keyword>
<keyword id="KW-0479">Metal-binding</keyword>
<protein>
    <recommendedName>
        <fullName evidence="1">UDP-2,3-diacylglucosamine hydrolase</fullName>
        <ecNumber evidence="1">3.6.1.54</ecNumber>
    </recommendedName>
    <alternativeName>
        <fullName evidence="1">UDP-2,3-diacylglucosamine diphosphatase</fullName>
    </alternativeName>
</protein>
<organism>
    <name type="scientific">Pseudomonas savastanoi pv. phaseolicola (strain 1448A / Race 6)</name>
    <name type="common">Pseudomonas syringae pv. phaseolicola (strain 1448A / Race 6)</name>
    <dbReference type="NCBI Taxonomy" id="264730"/>
    <lineage>
        <taxon>Bacteria</taxon>
        <taxon>Pseudomonadati</taxon>
        <taxon>Pseudomonadota</taxon>
        <taxon>Gammaproteobacteria</taxon>
        <taxon>Pseudomonadales</taxon>
        <taxon>Pseudomonadaceae</taxon>
        <taxon>Pseudomonas</taxon>
    </lineage>
</organism>
<accession>Q48L09</accession>
<reference key="1">
    <citation type="journal article" date="2005" name="J. Bacteriol.">
        <title>Whole-genome sequence analysis of Pseudomonas syringae pv. phaseolicola 1448A reveals divergence among pathovars in genes involved in virulence and transposition.</title>
        <authorList>
            <person name="Joardar V."/>
            <person name="Lindeberg M."/>
            <person name="Jackson R.W."/>
            <person name="Selengut J."/>
            <person name="Dodson R."/>
            <person name="Brinkac L.M."/>
            <person name="Daugherty S.C."/>
            <person name="DeBoy R.T."/>
            <person name="Durkin A.S."/>
            <person name="Gwinn Giglio M."/>
            <person name="Madupu R."/>
            <person name="Nelson W.C."/>
            <person name="Rosovitz M.J."/>
            <person name="Sullivan S.A."/>
            <person name="Crabtree J."/>
            <person name="Creasy T."/>
            <person name="Davidsen T.M."/>
            <person name="Haft D.H."/>
            <person name="Zafar N."/>
            <person name="Zhou L."/>
            <person name="Halpin R."/>
            <person name="Holley T."/>
            <person name="Khouri H.M."/>
            <person name="Feldblyum T.V."/>
            <person name="White O."/>
            <person name="Fraser C.M."/>
            <person name="Chatterjee A.K."/>
            <person name="Cartinhour S."/>
            <person name="Schneider D."/>
            <person name="Mansfield J.W."/>
            <person name="Collmer A."/>
            <person name="Buell R."/>
        </authorList>
    </citation>
    <scope>NUCLEOTIDE SEQUENCE [LARGE SCALE GENOMIC DNA]</scope>
    <source>
        <strain>1448A / Race 6</strain>
    </source>
</reference>
<evidence type="ECO:0000255" key="1">
    <source>
        <dbReference type="HAMAP-Rule" id="MF_00575"/>
    </source>
</evidence>
<proteinExistence type="inferred from homology"/>
<sequence length="248" mass="28269">MILLISDLHLEQDRPDITRAFLDLLAGRAREAEALYILGDFFEVWIGDDAMSPFQLSICKALRALSDSGTRIFLMHGNRDFMIGKGFCKAAGCTLLSDPSVVQLNGERVLLMHGDSLCTRDEGYIRMRRYLRHPLTLFILRHLPLGTRHKLARKLRNESRAQTRMKANDIVDVTPDEVPRIMQQFGVRTLVHGHTHRPAIHKLQIGDQAARRIVLGDWDRQGWVLQVDEQGFSLNSFDFVPETTALLN</sequence>
<name>LPXH_PSE14</name>
<comment type="function">
    <text evidence="1">Hydrolyzes the pyrophosphate bond of UDP-2,3-diacylglucosamine to yield 2,3-diacylglucosamine 1-phosphate (lipid X) and UMP by catalyzing the attack of water at the alpha-P atom. Involved in the biosynthesis of lipid A, a phosphorylated glycolipid that anchors the lipopolysaccharide to the outer membrane of the cell.</text>
</comment>
<comment type="catalytic activity">
    <reaction evidence="1">
        <text>UDP-2-N,3-O-bis[(3R)-3-hydroxytetradecanoyl]-alpha-D-glucosamine + H2O = 2-N,3-O-bis[(3R)-3-hydroxytetradecanoyl]-alpha-D-glucosaminyl 1-phosphate + UMP + 2 H(+)</text>
        <dbReference type="Rhea" id="RHEA:25213"/>
        <dbReference type="ChEBI" id="CHEBI:15377"/>
        <dbReference type="ChEBI" id="CHEBI:15378"/>
        <dbReference type="ChEBI" id="CHEBI:57865"/>
        <dbReference type="ChEBI" id="CHEBI:57957"/>
        <dbReference type="ChEBI" id="CHEBI:78847"/>
        <dbReference type="EC" id="3.6.1.54"/>
    </reaction>
</comment>
<comment type="cofactor">
    <cofactor evidence="1">
        <name>Mn(2+)</name>
        <dbReference type="ChEBI" id="CHEBI:29035"/>
    </cofactor>
    <text evidence="1">Binds 2 Mn(2+) ions per subunit in a binuclear metal center.</text>
</comment>
<comment type="pathway">
    <text evidence="1">Glycolipid biosynthesis; lipid IV(A) biosynthesis; lipid IV(A) from (3R)-3-hydroxytetradecanoyl-[acyl-carrier-protein] and UDP-N-acetyl-alpha-D-glucosamine: step 4/6.</text>
</comment>
<comment type="subcellular location">
    <subcellularLocation>
        <location evidence="1">Cell inner membrane</location>
        <topology evidence="1">Peripheral membrane protein</topology>
        <orientation evidence="1">Cytoplasmic side</orientation>
    </subcellularLocation>
</comment>
<comment type="similarity">
    <text evidence="1">Belongs to the LpxH family.</text>
</comment>
<dbReference type="EC" id="3.6.1.54" evidence="1"/>
<dbReference type="EMBL" id="CP000058">
    <property type="protein sequence ID" value="AAZ34661.1"/>
    <property type="molecule type" value="Genomic_DNA"/>
</dbReference>
<dbReference type="RefSeq" id="WP_004664344.1">
    <property type="nucleotide sequence ID" value="NC_005773.3"/>
</dbReference>
<dbReference type="SMR" id="Q48L09"/>
<dbReference type="KEGG" id="psp:PSPPH_1676"/>
<dbReference type="eggNOG" id="COG2908">
    <property type="taxonomic scope" value="Bacteria"/>
</dbReference>
<dbReference type="HOGENOM" id="CLU_074586_0_0_6"/>
<dbReference type="UniPathway" id="UPA00359">
    <property type="reaction ID" value="UER00480"/>
</dbReference>
<dbReference type="Proteomes" id="UP000000551">
    <property type="component" value="Chromosome"/>
</dbReference>
<dbReference type="GO" id="GO:0005737">
    <property type="term" value="C:cytoplasm"/>
    <property type="evidence" value="ECO:0007669"/>
    <property type="project" value="InterPro"/>
</dbReference>
<dbReference type="GO" id="GO:0019897">
    <property type="term" value="C:extrinsic component of plasma membrane"/>
    <property type="evidence" value="ECO:0007669"/>
    <property type="project" value="UniProtKB-UniRule"/>
</dbReference>
<dbReference type="GO" id="GO:0030145">
    <property type="term" value="F:manganese ion binding"/>
    <property type="evidence" value="ECO:0007669"/>
    <property type="project" value="UniProtKB-UniRule"/>
</dbReference>
<dbReference type="GO" id="GO:0008758">
    <property type="term" value="F:UDP-2,3-diacylglucosamine hydrolase activity"/>
    <property type="evidence" value="ECO:0007669"/>
    <property type="project" value="UniProtKB-UniRule"/>
</dbReference>
<dbReference type="GO" id="GO:0009245">
    <property type="term" value="P:lipid A biosynthetic process"/>
    <property type="evidence" value="ECO:0007669"/>
    <property type="project" value="UniProtKB-UniRule"/>
</dbReference>
<dbReference type="CDD" id="cd07398">
    <property type="entry name" value="MPP_YbbF-LpxH"/>
    <property type="match status" value="1"/>
</dbReference>
<dbReference type="Gene3D" id="3.60.21.10">
    <property type="match status" value="1"/>
</dbReference>
<dbReference type="HAMAP" id="MF_00575">
    <property type="entry name" value="LpxH"/>
    <property type="match status" value="1"/>
</dbReference>
<dbReference type="InterPro" id="IPR004843">
    <property type="entry name" value="Calcineurin-like_PHP_ApaH"/>
</dbReference>
<dbReference type="InterPro" id="IPR043461">
    <property type="entry name" value="LpxH-like"/>
</dbReference>
<dbReference type="InterPro" id="IPR029052">
    <property type="entry name" value="Metallo-depent_PP-like"/>
</dbReference>
<dbReference type="InterPro" id="IPR010138">
    <property type="entry name" value="UDP-diacylglucosamine_Hdrlase"/>
</dbReference>
<dbReference type="NCBIfam" id="TIGR01854">
    <property type="entry name" value="lipid_A_lpxH"/>
    <property type="match status" value="1"/>
</dbReference>
<dbReference type="NCBIfam" id="NF003743">
    <property type="entry name" value="PRK05340.1"/>
    <property type="match status" value="1"/>
</dbReference>
<dbReference type="PANTHER" id="PTHR34990:SF1">
    <property type="entry name" value="UDP-2,3-DIACYLGLUCOSAMINE HYDROLASE"/>
    <property type="match status" value="1"/>
</dbReference>
<dbReference type="PANTHER" id="PTHR34990">
    <property type="entry name" value="UDP-2,3-DIACYLGLUCOSAMINE HYDROLASE-RELATED"/>
    <property type="match status" value="1"/>
</dbReference>
<dbReference type="Pfam" id="PF00149">
    <property type="entry name" value="Metallophos"/>
    <property type="match status" value="1"/>
</dbReference>
<dbReference type="SUPFAM" id="SSF56300">
    <property type="entry name" value="Metallo-dependent phosphatases"/>
    <property type="match status" value="1"/>
</dbReference>